<feature type="chain" id="PRO_1000016104" description="Aspartyl/glutamyl-tRNA(Asn/Gln) amidotransferase subunit C">
    <location>
        <begin position="1"/>
        <end position="95"/>
    </location>
</feature>
<keyword id="KW-0067">ATP-binding</keyword>
<keyword id="KW-0436">Ligase</keyword>
<keyword id="KW-0547">Nucleotide-binding</keyword>
<keyword id="KW-0648">Protein biosynthesis</keyword>
<keyword id="KW-1185">Reference proteome</keyword>
<sequence>MSVTKKDVAYIAELARLKFGDTEMETMTVELNNILHYIDKLNEVDTEGVQPLSSIHDESNVLRADIEKTSISTDQVLLNAPDRQDRFFKVPKVIG</sequence>
<reference key="1">
    <citation type="submission" date="2006-12" db="EMBL/GenBank/DDBJ databases">
        <title>Complete sequence of Chlorobium phaeobacteroides DSM 266.</title>
        <authorList>
            <consortium name="US DOE Joint Genome Institute"/>
            <person name="Copeland A."/>
            <person name="Lucas S."/>
            <person name="Lapidus A."/>
            <person name="Barry K."/>
            <person name="Detter J.C."/>
            <person name="Glavina del Rio T."/>
            <person name="Hammon N."/>
            <person name="Israni S."/>
            <person name="Pitluck S."/>
            <person name="Goltsman E."/>
            <person name="Schmutz J."/>
            <person name="Larimer F."/>
            <person name="Land M."/>
            <person name="Hauser L."/>
            <person name="Mikhailova N."/>
            <person name="Li T."/>
            <person name="Overmann J."/>
            <person name="Bryant D.A."/>
            <person name="Richardson P."/>
        </authorList>
    </citation>
    <scope>NUCLEOTIDE SEQUENCE [LARGE SCALE GENOMIC DNA]</scope>
    <source>
        <strain>DSM 266 / SMG 266 / 2430</strain>
    </source>
</reference>
<comment type="function">
    <text evidence="1">Allows the formation of correctly charged Asn-tRNA(Asn) or Gln-tRNA(Gln) through the transamidation of misacylated Asp-tRNA(Asn) or Glu-tRNA(Gln) in organisms which lack either or both of asparaginyl-tRNA or glutaminyl-tRNA synthetases. The reaction takes place in the presence of glutamine and ATP through an activated phospho-Asp-tRNA(Asn) or phospho-Glu-tRNA(Gln).</text>
</comment>
<comment type="catalytic activity">
    <reaction evidence="1">
        <text>L-glutamyl-tRNA(Gln) + L-glutamine + ATP + H2O = L-glutaminyl-tRNA(Gln) + L-glutamate + ADP + phosphate + H(+)</text>
        <dbReference type="Rhea" id="RHEA:17521"/>
        <dbReference type="Rhea" id="RHEA-COMP:9681"/>
        <dbReference type="Rhea" id="RHEA-COMP:9684"/>
        <dbReference type="ChEBI" id="CHEBI:15377"/>
        <dbReference type="ChEBI" id="CHEBI:15378"/>
        <dbReference type="ChEBI" id="CHEBI:29985"/>
        <dbReference type="ChEBI" id="CHEBI:30616"/>
        <dbReference type="ChEBI" id="CHEBI:43474"/>
        <dbReference type="ChEBI" id="CHEBI:58359"/>
        <dbReference type="ChEBI" id="CHEBI:78520"/>
        <dbReference type="ChEBI" id="CHEBI:78521"/>
        <dbReference type="ChEBI" id="CHEBI:456216"/>
    </reaction>
</comment>
<comment type="catalytic activity">
    <reaction evidence="1">
        <text>L-aspartyl-tRNA(Asn) + L-glutamine + ATP + H2O = L-asparaginyl-tRNA(Asn) + L-glutamate + ADP + phosphate + 2 H(+)</text>
        <dbReference type="Rhea" id="RHEA:14513"/>
        <dbReference type="Rhea" id="RHEA-COMP:9674"/>
        <dbReference type="Rhea" id="RHEA-COMP:9677"/>
        <dbReference type="ChEBI" id="CHEBI:15377"/>
        <dbReference type="ChEBI" id="CHEBI:15378"/>
        <dbReference type="ChEBI" id="CHEBI:29985"/>
        <dbReference type="ChEBI" id="CHEBI:30616"/>
        <dbReference type="ChEBI" id="CHEBI:43474"/>
        <dbReference type="ChEBI" id="CHEBI:58359"/>
        <dbReference type="ChEBI" id="CHEBI:78515"/>
        <dbReference type="ChEBI" id="CHEBI:78516"/>
        <dbReference type="ChEBI" id="CHEBI:456216"/>
    </reaction>
</comment>
<comment type="subunit">
    <text evidence="1">Heterotrimer of A, B and C subunits.</text>
</comment>
<comment type="similarity">
    <text evidence="1">Belongs to the GatC family.</text>
</comment>
<name>GATC_CHLPD</name>
<proteinExistence type="inferred from homology"/>
<protein>
    <recommendedName>
        <fullName evidence="1">Aspartyl/glutamyl-tRNA(Asn/Gln) amidotransferase subunit C</fullName>
        <shortName evidence="1">Asp/Glu-ADT subunit C</shortName>
        <ecNumber evidence="1">6.3.5.-</ecNumber>
    </recommendedName>
</protein>
<gene>
    <name evidence="1" type="primary">gatC</name>
    <name type="ordered locus">Cpha266_2082</name>
</gene>
<organism>
    <name type="scientific">Chlorobium phaeobacteroides (strain DSM 266 / SMG 266 / 2430)</name>
    <dbReference type="NCBI Taxonomy" id="290317"/>
    <lineage>
        <taxon>Bacteria</taxon>
        <taxon>Pseudomonadati</taxon>
        <taxon>Chlorobiota</taxon>
        <taxon>Chlorobiia</taxon>
        <taxon>Chlorobiales</taxon>
        <taxon>Chlorobiaceae</taxon>
        <taxon>Chlorobium/Pelodictyon group</taxon>
        <taxon>Chlorobium</taxon>
    </lineage>
</organism>
<evidence type="ECO:0000255" key="1">
    <source>
        <dbReference type="HAMAP-Rule" id="MF_00122"/>
    </source>
</evidence>
<accession>A1BI67</accession>
<dbReference type="EC" id="6.3.5.-" evidence="1"/>
<dbReference type="EMBL" id="CP000492">
    <property type="protein sequence ID" value="ABL66094.1"/>
    <property type="molecule type" value="Genomic_DNA"/>
</dbReference>
<dbReference type="RefSeq" id="WP_011745896.1">
    <property type="nucleotide sequence ID" value="NC_008639.1"/>
</dbReference>
<dbReference type="SMR" id="A1BI67"/>
<dbReference type="STRING" id="290317.Cpha266_2082"/>
<dbReference type="KEGG" id="cph:Cpha266_2082"/>
<dbReference type="eggNOG" id="COG0721">
    <property type="taxonomic scope" value="Bacteria"/>
</dbReference>
<dbReference type="HOGENOM" id="CLU_105899_6_1_10"/>
<dbReference type="OrthoDB" id="9813938at2"/>
<dbReference type="Proteomes" id="UP000008701">
    <property type="component" value="Chromosome"/>
</dbReference>
<dbReference type="GO" id="GO:0050566">
    <property type="term" value="F:asparaginyl-tRNA synthase (glutamine-hydrolyzing) activity"/>
    <property type="evidence" value="ECO:0007669"/>
    <property type="project" value="RHEA"/>
</dbReference>
<dbReference type="GO" id="GO:0005524">
    <property type="term" value="F:ATP binding"/>
    <property type="evidence" value="ECO:0007669"/>
    <property type="project" value="UniProtKB-KW"/>
</dbReference>
<dbReference type="GO" id="GO:0050567">
    <property type="term" value="F:glutaminyl-tRNA synthase (glutamine-hydrolyzing) activity"/>
    <property type="evidence" value="ECO:0007669"/>
    <property type="project" value="UniProtKB-UniRule"/>
</dbReference>
<dbReference type="GO" id="GO:0070681">
    <property type="term" value="P:glutaminyl-tRNAGln biosynthesis via transamidation"/>
    <property type="evidence" value="ECO:0007669"/>
    <property type="project" value="TreeGrafter"/>
</dbReference>
<dbReference type="GO" id="GO:0006450">
    <property type="term" value="P:regulation of translational fidelity"/>
    <property type="evidence" value="ECO:0007669"/>
    <property type="project" value="InterPro"/>
</dbReference>
<dbReference type="GO" id="GO:0006412">
    <property type="term" value="P:translation"/>
    <property type="evidence" value="ECO:0007669"/>
    <property type="project" value="UniProtKB-UniRule"/>
</dbReference>
<dbReference type="Gene3D" id="1.10.20.60">
    <property type="entry name" value="Glu-tRNAGln amidotransferase C subunit, N-terminal domain"/>
    <property type="match status" value="1"/>
</dbReference>
<dbReference type="HAMAP" id="MF_00122">
    <property type="entry name" value="GatC"/>
    <property type="match status" value="1"/>
</dbReference>
<dbReference type="InterPro" id="IPR036113">
    <property type="entry name" value="Asp/Glu-ADT_sf_sub_c"/>
</dbReference>
<dbReference type="InterPro" id="IPR003837">
    <property type="entry name" value="GatC"/>
</dbReference>
<dbReference type="NCBIfam" id="TIGR00135">
    <property type="entry name" value="gatC"/>
    <property type="match status" value="1"/>
</dbReference>
<dbReference type="PANTHER" id="PTHR15004">
    <property type="entry name" value="GLUTAMYL-TRNA(GLN) AMIDOTRANSFERASE SUBUNIT C, MITOCHONDRIAL"/>
    <property type="match status" value="1"/>
</dbReference>
<dbReference type="PANTHER" id="PTHR15004:SF0">
    <property type="entry name" value="GLUTAMYL-TRNA(GLN) AMIDOTRANSFERASE SUBUNIT C, MITOCHONDRIAL"/>
    <property type="match status" value="1"/>
</dbReference>
<dbReference type="Pfam" id="PF02686">
    <property type="entry name" value="GatC"/>
    <property type="match status" value="1"/>
</dbReference>
<dbReference type="SUPFAM" id="SSF141000">
    <property type="entry name" value="Glu-tRNAGln amidotransferase C subunit"/>
    <property type="match status" value="1"/>
</dbReference>